<evidence type="ECO:0000255" key="1">
    <source>
        <dbReference type="HAMAP-Rule" id="MF_01631"/>
    </source>
</evidence>
<dbReference type="EC" id="2.7.7.23" evidence="1"/>
<dbReference type="EC" id="2.3.1.157" evidence="1"/>
<dbReference type="EMBL" id="CP000886">
    <property type="protein sequence ID" value="ABX70114.1"/>
    <property type="molecule type" value="Genomic_DNA"/>
</dbReference>
<dbReference type="RefSeq" id="WP_000934851.1">
    <property type="nucleotide sequence ID" value="NC_010102.1"/>
</dbReference>
<dbReference type="SMR" id="A9MXA3"/>
<dbReference type="KEGG" id="spq:SPAB_04803"/>
<dbReference type="PATRIC" id="fig|1016998.12.peg.4518"/>
<dbReference type="HOGENOM" id="CLU_029499_15_2_6"/>
<dbReference type="BioCyc" id="SENT1016998:SPAB_RS19500-MONOMER"/>
<dbReference type="UniPathway" id="UPA00113">
    <property type="reaction ID" value="UER00532"/>
</dbReference>
<dbReference type="UniPathway" id="UPA00113">
    <property type="reaction ID" value="UER00533"/>
</dbReference>
<dbReference type="UniPathway" id="UPA00973"/>
<dbReference type="Proteomes" id="UP000008556">
    <property type="component" value="Chromosome"/>
</dbReference>
<dbReference type="GO" id="GO:0005737">
    <property type="term" value="C:cytoplasm"/>
    <property type="evidence" value="ECO:0007669"/>
    <property type="project" value="UniProtKB-SubCell"/>
</dbReference>
<dbReference type="GO" id="GO:0016020">
    <property type="term" value="C:membrane"/>
    <property type="evidence" value="ECO:0007669"/>
    <property type="project" value="GOC"/>
</dbReference>
<dbReference type="GO" id="GO:0019134">
    <property type="term" value="F:glucosamine-1-phosphate N-acetyltransferase activity"/>
    <property type="evidence" value="ECO:0007669"/>
    <property type="project" value="UniProtKB-UniRule"/>
</dbReference>
<dbReference type="GO" id="GO:0000287">
    <property type="term" value="F:magnesium ion binding"/>
    <property type="evidence" value="ECO:0007669"/>
    <property type="project" value="UniProtKB-UniRule"/>
</dbReference>
<dbReference type="GO" id="GO:0003977">
    <property type="term" value="F:UDP-N-acetylglucosamine diphosphorylase activity"/>
    <property type="evidence" value="ECO:0007669"/>
    <property type="project" value="UniProtKB-UniRule"/>
</dbReference>
<dbReference type="GO" id="GO:0000902">
    <property type="term" value="P:cell morphogenesis"/>
    <property type="evidence" value="ECO:0007669"/>
    <property type="project" value="UniProtKB-UniRule"/>
</dbReference>
<dbReference type="GO" id="GO:0071555">
    <property type="term" value="P:cell wall organization"/>
    <property type="evidence" value="ECO:0007669"/>
    <property type="project" value="UniProtKB-KW"/>
</dbReference>
<dbReference type="GO" id="GO:0009245">
    <property type="term" value="P:lipid A biosynthetic process"/>
    <property type="evidence" value="ECO:0007669"/>
    <property type="project" value="UniProtKB-UniRule"/>
</dbReference>
<dbReference type="GO" id="GO:0009252">
    <property type="term" value="P:peptidoglycan biosynthetic process"/>
    <property type="evidence" value="ECO:0007669"/>
    <property type="project" value="UniProtKB-UniRule"/>
</dbReference>
<dbReference type="GO" id="GO:0008360">
    <property type="term" value="P:regulation of cell shape"/>
    <property type="evidence" value="ECO:0007669"/>
    <property type="project" value="UniProtKB-KW"/>
</dbReference>
<dbReference type="GO" id="GO:0006048">
    <property type="term" value="P:UDP-N-acetylglucosamine biosynthetic process"/>
    <property type="evidence" value="ECO:0007669"/>
    <property type="project" value="UniProtKB-UniPathway"/>
</dbReference>
<dbReference type="CDD" id="cd02540">
    <property type="entry name" value="GT2_GlmU_N_bac"/>
    <property type="match status" value="1"/>
</dbReference>
<dbReference type="CDD" id="cd03353">
    <property type="entry name" value="LbH_GlmU_C"/>
    <property type="match status" value="1"/>
</dbReference>
<dbReference type="FunFam" id="2.160.10.10:FF:000011">
    <property type="entry name" value="Bifunctional protein GlmU"/>
    <property type="match status" value="1"/>
</dbReference>
<dbReference type="FunFam" id="3.90.550.10:FF:000006">
    <property type="entry name" value="Bifunctional protein GlmU"/>
    <property type="match status" value="1"/>
</dbReference>
<dbReference type="Gene3D" id="2.160.10.10">
    <property type="entry name" value="Hexapeptide repeat proteins"/>
    <property type="match status" value="1"/>
</dbReference>
<dbReference type="Gene3D" id="3.90.550.10">
    <property type="entry name" value="Spore Coat Polysaccharide Biosynthesis Protein SpsA, Chain A"/>
    <property type="match status" value="1"/>
</dbReference>
<dbReference type="HAMAP" id="MF_01631">
    <property type="entry name" value="GlmU"/>
    <property type="match status" value="1"/>
</dbReference>
<dbReference type="InterPro" id="IPR005882">
    <property type="entry name" value="Bifunctional_GlmU"/>
</dbReference>
<dbReference type="InterPro" id="IPR050065">
    <property type="entry name" value="GlmU-like"/>
</dbReference>
<dbReference type="InterPro" id="IPR038009">
    <property type="entry name" value="GlmU_C_LbH"/>
</dbReference>
<dbReference type="InterPro" id="IPR001451">
    <property type="entry name" value="Hexapep"/>
</dbReference>
<dbReference type="InterPro" id="IPR018357">
    <property type="entry name" value="Hexapep_transf_CS"/>
</dbReference>
<dbReference type="InterPro" id="IPR025877">
    <property type="entry name" value="MobA-like_NTP_Trfase"/>
</dbReference>
<dbReference type="InterPro" id="IPR029044">
    <property type="entry name" value="Nucleotide-diphossugar_trans"/>
</dbReference>
<dbReference type="InterPro" id="IPR011004">
    <property type="entry name" value="Trimer_LpxA-like_sf"/>
</dbReference>
<dbReference type="NCBIfam" id="TIGR01173">
    <property type="entry name" value="glmU"/>
    <property type="match status" value="1"/>
</dbReference>
<dbReference type="NCBIfam" id="NF006986">
    <property type="entry name" value="PRK09451.1"/>
    <property type="match status" value="1"/>
</dbReference>
<dbReference type="PANTHER" id="PTHR43584:SF3">
    <property type="entry name" value="BIFUNCTIONAL PROTEIN GLMU"/>
    <property type="match status" value="1"/>
</dbReference>
<dbReference type="PANTHER" id="PTHR43584">
    <property type="entry name" value="NUCLEOTIDYL TRANSFERASE"/>
    <property type="match status" value="1"/>
</dbReference>
<dbReference type="Pfam" id="PF00132">
    <property type="entry name" value="Hexapep"/>
    <property type="match status" value="1"/>
</dbReference>
<dbReference type="Pfam" id="PF12804">
    <property type="entry name" value="NTP_transf_3"/>
    <property type="match status" value="1"/>
</dbReference>
<dbReference type="SUPFAM" id="SSF53448">
    <property type="entry name" value="Nucleotide-diphospho-sugar transferases"/>
    <property type="match status" value="1"/>
</dbReference>
<dbReference type="SUPFAM" id="SSF51161">
    <property type="entry name" value="Trimeric LpxA-like enzymes"/>
    <property type="match status" value="1"/>
</dbReference>
<dbReference type="PROSITE" id="PS00101">
    <property type="entry name" value="HEXAPEP_TRANSFERASES"/>
    <property type="match status" value="1"/>
</dbReference>
<accession>A9MXA3</accession>
<gene>
    <name evidence="1" type="primary">glmU</name>
    <name type="ordered locus">SPAB_04803</name>
</gene>
<proteinExistence type="inferred from homology"/>
<feature type="chain" id="PRO_1000088138" description="Bifunctional protein GlmU">
    <location>
        <begin position="1"/>
        <end position="456"/>
    </location>
</feature>
<feature type="region of interest" description="Pyrophosphorylase" evidence="1">
    <location>
        <begin position="1"/>
        <end position="229"/>
    </location>
</feature>
<feature type="region of interest" description="Linker" evidence="1">
    <location>
        <begin position="230"/>
        <end position="250"/>
    </location>
</feature>
<feature type="region of interest" description="N-acetyltransferase" evidence="1">
    <location>
        <begin position="251"/>
        <end position="456"/>
    </location>
</feature>
<feature type="active site" description="Proton acceptor" evidence="1">
    <location>
        <position position="363"/>
    </location>
</feature>
<feature type="binding site" evidence="1">
    <location>
        <begin position="11"/>
        <end position="14"/>
    </location>
    <ligand>
        <name>UDP-N-acetyl-alpha-D-glucosamine</name>
        <dbReference type="ChEBI" id="CHEBI:57705"/>
    </ligand>
</feature>
<feature type="binding site" evidence="1">
    <location>
        <position position="25"/>
    </location>
    <ligand>
        <name>UDP-N-acetyl-alpha-D-glucosamine</name>
        <dbReference type="ChEBI" id="CHEBI:57705"/>
    </ligand>
</feature>
<feature type="binding site" evidence="1">
    <location>
        <position position="76"/>
    </location>
    <ligand>
        <name>UDP-N-acetyl-alpha-D-glucosamine</name>
        <dbReference type="ChEBI" id="CHEBI:57705"/>
    </ligand>
</feature>
<feature type="binding site" evidence="1">
    <location>
        <begin position="81"/>
        <end position="82"/>
    </location>
    <ligand>
        <name>UDP-N-acetyl-alpha-D-glucosamine</name>
        <dbReference type="ChEBI" id="CHEBI:57705"/>
    </ligand>
</feature>
<feature type="binding site" evidence="1">
    <location>
        <begin position="103"/>
        <end position="105"/>
    </location>
    <ligand>
        <name>UDP-N-acetyl-alpha-D-glucosamine</name>
        <dbReference type="ChEBI" id="CHEBI:57705"/>
    </ligand>
</feature>
<feature type="binding site" evidence="1">
    <location>
        <position position="105"/>
    </location>
    <ligand>
        <name>Mg(2+)</name>
        <dbReference type="ChEBI" id="CHEBI:18420"/>
    </ligand>
</feature>
<feature type="binding site" evidence="1">
    <location>
        <position position="140"/>
    </location>
    <ligand>
        <name>UDP-N-acetyl-alpha-D-glucosamine</name>
        <dbReference type="ChEBI" id="CHEBI:57705"/>
    </ligand>
</feature>
<feature type="binding site" evidence="1">
    <location>
        <position position="154"/>
    </location>
    <ligand>
        <name>UDP-N-acetyl-alpha-D-glucosamine</name>
        <dbReference type="ChEBI" id="CHEBI:57705"/>
    </ligand>
</feature>
<feature type="binding site" evidence="1">
    <location>
        <position position="169"/>
    </location>
    <ligand>
        <name>UDP-N-acetyl-alpha-D-glucosamine</name>
        <dbReference type="ChEBI" id="CHEBI:57705"/>
    </ligand>
</feature>
<feature type="binding site" evidence="1">
    <location>
        <position position="227"/>
    </location>
    <ligand>
        <name>Mg(2+)</name>
        <dbReference type="ChEBI" id="CHEBI:18420"/>
    </ligand>
</feature>
<feature type="binding site" evidence="1">
    <location>
        <position position="227"/>
    </location>
    <ligand>
        <name>UDP-N-acetyl-alpha-D-glucosamine</name>
        <dbReference type="ChEBI" id="CHEBI:57705"/>
    </ligand>
</feature>
<feature type="binding site" evidence="1">
    <location>
        <position position="333"/>
    </location>
    <ligand>
        <name>UDP-N-acetyl-alpha-D-glucosamine</name>
        <dbReference type="ChEBI" id="CHEBI:57705"/>
    </ligand>
</feature>
<feature type="binding site" evidence="1">
    <location>
        <position position="351"/>
    </location>
    <ligand>
        <name>UDP-N-acetyl-alpha-D-glucosamine</name>
        <dbReference type="ChEBI" id="CHEBI:57705"/>
    </ligand>
</feature>
<feature type="binding site" evidence="1">
    <location>
        <position position="366"/>
    </location>
    <ligand>
        <name>UDP-N-acetyl-alpha-D-glucosamine</name>
        <dbReference type="ChEBI" id="CHEBI:57705"/>
    </ligand>
</feature>
<feature type="binding site" evidence="1">
    <location>
        <position position="377"/>
    </location>
    <ligand>
        <name>UDP-N-acetyl-alpha-D-glucosamine</name>
        <dbReference type="ChEBI" id="CHEBI:57705"/>
    </ligand>
</feature>
<feature type="binding site" evidence="1">
    <location>
        <position position="380"/>
    </location>
    <ligand>
        <name>acetyl-CoA</name>
        <dbReference type="ChEBI" id="CHEBI:57288"/>
    </ligand>
</feature>
<feature type="binding site" evidence="1">
    <location>
        <begin position="386"/>
        <end position="387"/>
    </location>
    <ligand>
        <name>acetyl-CoA</name>
        <dbReference type="ChEBI" id="CHEBI:57288"/>
    </ligand>
</feature>
<feature type="binding site" evidence="1">
    <location>
        <position position="405"/>
    </location>
    <ligand>
        <name>acetyl-CoA</name>
        <dbReference type="ChEBI" id="CHEBI:57288"/>
    </ligand>
</feature>
<feature type="binding site" evidence="1">
    <location>
        <position position="423"/>
    </location>
    <ligand>
        <name>acetyl-CoA</name>
        <dbReference type="ChEBI" id="CHEBI:57288"/>
    </ligand>
</feature>
<feature type="binding site" evidence="1">
    <location>
        <position position="440"/>
    </location>
    <ligand>
        <name>acetyl-CoA</name>
        <dbReference type="ChEBI" id="CHEBI:57288"/>
    </ligand>
</feature>
<name>GLMU_SALPB</name>
<comment type="function">
    <text evidence="1">Catalyzes the last two sequential reactions in the de novo biosynthetic pathway for UDP-N-acetylglucosamine (UDP-GlcNAc). The C-terminal domain catalyzes the transfer of acetyl group from acetyl coenzyme A to glucosamine-1-phosphate (GlcN-1-P) to produce N-acetylglucosamine-1-phosphate (GlcNAc-1-P), which is converted into UDP-GlcNAc by the transfer of uridine 5-monophosphate (from uridine 5-triphosphate), a reaction catalyzed by the N-terminal domain.</text>
</comment>
<comment type="catalytic activity">
    <reaction evidence="1">
        <text>alpha-D-glucosamine 1-phosphate + acetyl-CoA = N-acetyl-alpha-D-glucosamine 1-phosphate + CoA + H(+)</text>
        <dbReference type="Rhea" id="RHEA:13725"/>
        <dbReference type="ChEBI" id="CHEBI:15378"/>
        <dbReference type="ChEBI" id="CHEBI:57287"/>
        <dbReference type="ChEBI" id="CHEBI:57288"/>
        <dbReference type="ChEBI" id="CHEBI:57776"/>
        <dbReference type="ChEBI" id="CHEBI:58516"/>
        <dbReference type="EC" id="2.3.1.157"/>
    </reaction>
</comment>
<comment type="catalytic activity">
    <reaction evidence="1">
        <text>N-acetyl-alpha-D-glucosamine 1-phosphate + UTP + H(+) = UDP-N-acetyl-alpha-D-glucosamine + diphosphate</text>
        <dbReference type="Rhea" id="RHEA:13509"/>
        <dbReference type="ChEBI" id="CHEBI:15378"/>
        <dbReference type="ChEBI" id="CHEBI:33019"/>
        <dbReference type="ChEBI" id="CHEBI:46398"/>
        <dbReference type="ChEBI" id="CHEBI:57705"/>
        <dbReference type="ChEBI" id="CHEBI:57776"/>
        <dbReference type="EC" id="2.7.7.23"/>
    </reaction>
</comment>
<comment type="cofactor">
    <cofactor evidence="1">
        <name>Mg(2+)</name>
        <dbReference type="ChEBI" id="CHEBI:18420"/>
    </cofactor>
    <text evidence="1">Binds 1 Mg(2+) ion per subunit.</text>
</comment>
<comment type="pathway">
    <text evidence="1">Nucleotide-sugar biosynthesis; UDP-N-acetyl-alpha-D-glucosamine biosynthesis; N-acetyl-alpha-D-glucosamine 1-phosphate from alpha-D-glucosamine 6-phosphate (route II): step 2/2.</text>
</comment>
<comment type="pathway">
    <text evidence="1">Nucleotide-sugar biosynthesis; UDP-N-acetyl-alpha-D-glucosamine biosynthesis; UDP-N-acetyl-alpha-D-glucosamine from N-acetyl-alpha-D-glucosamine 1-phosphate: step 1/1.</text>
</comment>
<comment type="pathway">
    <text evidence="1">Bacterial outer membrane biogenesis; LPS lipid A biosynthesis.</text>
</comment>
<comment type="subunit">
    <text evidence="1">Homotrimer.</text>
</comment>
<comment type="subcellular location">
    <subcellularLocation>
        <location evidence="1">Cytoplasm</location>
    </subcellularLocation>
</comment>
<comment type="similarity">
    <text evidence="1">In the N-terminal section; belongs to the N-acetylglucosamine-1-phosphate uridyltransferase family.</text>
</comment>
<comment type="similarity">
    <text evidence="1">In the C-terminal section; belongs to the transferase hexapeptide repeat family.</text>
</comment>
<keyword id="KW-0012">Acyltransferase</keyword>
<keyword id="KW-0133">Cell shape</keyword>
<keyword id="KW-0961">Cell wall biogenesis/degradation</keyword>
<keyword id="KW-0963">Cytoplasm</keyword>
<keyword id="KW-0460">Magnesium</keyword>
<keyword id="KW-0479">Metal-binding</keyword>
<keyword id="KW-0511">Multifunctional enzyme</keyword>
<keyword id="KW-0548">Nucleotidyltransferase</keyword>
<keyword id="KW-0573">Peptidoglycan synthesis</keyword>
<keyword id="KW-0677">Repeat</keyword>
<keyword id="KW-0808">Transferase</keyword>
<protein>
    <recommendedName>
        <fullName evidence="1">Bifunctional protein GlmU</fullName>
    </recommendedName>
    <domain>
        <recommendedName>
            <fullName evidence="1">UDP-N-acetylglucosamine pyrophosphorylase</fullName>
            <ecNumber evidence="1">2.7.7.23</ecNumber>
        </recommendedName>
        <alternativeName>
            <fullName evidence="1">N-acetylglucosamine-1-phosphate uridyltransferase</fullName>
        </alternativeName>
    </domain>
    <domain>
        <recommendedName>
            <fullName evidence="1">Glucosamine-1-phosphate N-acetyltransferase</fullName>
            <ecNumber evidence="1">2.3.1.157</ecNumber>
        </recommendedName>
    </domain>
</protein>
<sequence>MLNSAMSVVILAAGKGTRMYSDIPKVLHTLAGKPMVQHVIDAATKLGAAQVHLVYGHGGELLKQTLKDDKLNWVLQAEQLGTGHAMQQAAPFFSDDEDILMLYGDVPLISVETLQRLRDAKPQGGIGLLTVKLDDPSGYGRITRENGKVTGIVEHKDATDEQRQIQEINTGILIANGADLKRWLSKLTNNNAQGEYYITDIIALAYQEGREIAAVHPARISETDGVNNRLQLSRLERIYQAEQAEKLLLSGVMLRDPARFDLRGTLHCGMDVEIDANVIIEGYVTLGHRVKIGAGCIIKNSVIGDDCEISPYSVVEDAHLEAACTIGPFARLRPGAELLAGAHVGNFVEMKKARLGKGSKAGHLTYLGDAEIGDNVNIGAGTITCNYDGANKFKTVIGDDVFVGSDTQLVAPVTVGKGATIAAGTTVTRNVADNELVLSRVPQVHKQGWQRPVKKK</sequence>
<organism>
    <name type="scientific">Salmonella paratyphi B (strain ATCC BAA-1250 / SPB7)</name>
    <dbReference type="NCBI Taxonomy" id="1016998"/>
    <lineage>
        <taxon>Bacteria</taxon>
        <taxon>Pseudomonadati</taxon>
        <taxon>Pseudomonadota</taxon>
        <taxon>Gammaproteobacteria</taxon>
        <taxon>Enterobacterales</taxon>
        <taxon>Enterobacteriaceae</taxon>
        <taxon>Salmonella</taxon>
    </lineage>
</organism>
<reference key="1">
    <citation type="submission" date="2007-11" db="EMBL/GenBank/DDBJ databases">
        <authorList>
            <consortium name="The Salmonella enterica serovar Paratyphi B Genome Sequencing Project"/>
            <person name="McClelland M."/>
            <person name="Sanderson E.K."/>
            <person name="Porwollik S."/>
            <person name="Spieth J."/>
            <person name="Clifton W.S."/>
            <person name="Fulton R."/>
            <person name="Cordes M."/>
            <person name="Wollam A."/>
            <person name="Shah N."/>
            <person name="Pepin K."/>
            <person name="Bhonagiri V."/>
            <person name="Nash W."/>
            <person name="Johnson M."/>
            <person name="Thiruvilangam P."/>
            <person name="Wilson R."/>
        </authorList>
    </citation>
    <scope>NUCLEOTIDE SEQUENCE [LARGE SCALE GENOMIC DNA]</scope>
    <source>
        <strain>ATCC BAA-1250 / SPB7</strain>
    </source>
</reference>